<feature type="chain" id="PRO_0000400160" description="D-inositol 3-phosphate glycosyltransferase">
    <location>
        <begin position="1"/>
        <end position="464"/>
    </location>
</feature>
<feature type="region of interest" description="Disordered" evidence="2">
    <location>
        <begin position="1"/>
        <end position="44"/>
    </location>
</feature>
<feature type="compositionally biased region" description="Basic and acidic residues" evidence="2">
    <location>
        <begin position="1"/>
        <end position="20"/>
    </location>
</feature>
<feature type="binding site" evidence="1">
    <location>
        <position position="53"/>
    </location>
    <ligand>
        <name>1D-myo-inositol 3-phosphate</name>
        <dbReference type="ChEBI" id="CHEBI:58401"/>
    </ligand>
</feature>
<feature type="binding site" evidence="1">
    <location>
        <begin position="59"/>
        <end position="60"/>
    </location>
    <ligand>
        <name>UDP-N-acetyl-alpha-D-glucosamine</name>
        <dbReference type="ChEBI" id="CHEBI:57705"/>
    </ligand>
</feature>
<feature type="binding site" evidence="1">
    <location>
        <begin position="64"/>
        <end position="69"/>
    </location>
    <ligand>
        <name>1D-myo-inositol 3-phosphate</name>
        <dbReference type="ChEBI" id="CHEBI:58401"/>
    </ligand>
</feature>
<feature type="binding site" evidence="1">
    <location>
        <position position="67"/>
    </location>
    <ligand>
        <name>UDP-N-acetyl-alpha-D-glucosamine</name>
        <dbReference type="ChEBI" id="CHEBI:57705"/>
    </ligand>
</feature>
<feature type="binding site" evidence="1">
    <location>
        <position position="122"/>
    </location>
    <ligand>
        <name>1D-myo-inositol 3-phosphate</name>
        <dbReference type="ChEBI" id="CHEBI:58401"/>
    </ligand>
</feature>
<feature type="binding site" evidence="1">
    <location>
        <position position="155"/>
    </location>
    <ligand>
        <name>1D-myo-inositol 3-phosphate</name>
        <dbReference type="ChEBI" id="CHEBI:58401"/>
    </ligand>
</feature>
<feature type="binding site" evidence="1">
    <location>
        <position position="179"/>
    </location>
    <ligand>
        <name>1D-myo-inositol 3-phosphate</name>
        <dbReference type="ChEBI" id="CHEBI:58401"/>
    </ligand>
</feature>
<feature type="binding site" evidence="1">
    <location>
        <position position="199"/>
    </location>
    <ligand>
        <name>1D-myo-inositol 3-phosphate</name>
        <dbReference type="ChEBI" id="CHEBI:58401"/>
    </ligand>
</feature>
<feature type="binding site" evidence="1">
    <location>
        <position position="274"/>
    </location>
    <ligand>
        <name>UDP-N-acetyl-alpha-D-glucosamine</name>
        <dbReference type="ChEBI" id="CHEBI:57705"/>
    </ligand>
</feature>
<feature type="binding site" evidence="1">
    <location>
        <position position="279"/>
    </location>
    <ligand>
        <name>UDP-N-acetyl-alpha-D-glucosamine</name>
        <dbReference type="ChEBI" id="CHEBI:57705"/>
    </ligand>
</feature>
<feature type="binding site" evidence="1">
    <location>
        <position position="340"/>
    </location>
    <ligand>
        <name>UDP-N-acetyl-alpha-D-glucosamine</name>
        <dbReference type="ChEBI" id="CHEBI:57705"/>
    </ligand>
</feature>
<feature type="binding site" evidence="1">
    <location>
        <position position="349"/>
    </location>
    <ligand>
        <name>Mg(2+)</name>
        <dbReference type="ChEBI" id="CHEBI:18420"/>
    </ligand>
</feature>
<feature type="binding site" evidence="1">
    <location>
        <position position="350"/>
    </location>
    <ligand>
        <name>Mg(2+)</name>
        <dbReference type="ChEBI" id="CHEBI:18420"/>
    </ligand>
</feature>
<feature type="binding site" evidence="1">
    <location>
        <position position="352"/>
    </location>
    <ligand>
        <name>Mg(2+)</name>
        <dbReference type="ChEBI" id="CHEBI:18420"/>
    </ligand>
</feature>
<feature type="binding site" evidence="1">
    <location>
        <position position="362"/>
    </location>
    <ligand>
        <name>UDP-N-acetyl-alpha-D-glucosamine</name>
        <dbReference type="ChEBI" id="CHEBI:57705"/>
    </ligand>
</feature>
<feature type="binding site" evidence="1">
    <location>
        <position position="370"/>
    </location>
    <ligand>
        <name>UDP-N-acetyl-alpha-D-glucosamine</name>
        <dbReference type="ChEBI" id="CHEBI:57705"/>
    </ligand>
</feature>
<feature type="binding site" evidence="1">
    <location>
        <position position="376"/>
    </location>
    <ligand>
        <name>Mg(2+)</name>
        <dbReference type="ChEBI" id="CHEBI:18420"/>
    </ligand>
</feature>
<evidence type="ECO:0000255" key="1">
    <source>
        <dbReference type="HAMAP-Rule" id="MF_01695"/>
    </source>
</evidence>
<evidence type="ECO:0000256" key="2">
    <source>
        <dbReference type="SAM" id="MobiDB-lite"/>
    </source>
</evidence>
<name>MSHA_STRAW</name>
<gene>
    <name evidence="1" type="primary">mshA</name>
    <name type="synonym">glgA1</name>
    <name type="ordered locus">SAV_4006</name>
</gene>
<comment type="function">
    <text evidence="1">Catalyzes the transfer of a N-acetyl-glucosamine moiety to 1D-myo-inositol 3-phosphate to produce 1D-myo-inositol 2-acetamido-2-deoxy-glucopyranoside 3-phosphate in the mycothiol biosynthesis pathway.</text>
</comment>
<comment type="catalytic activity">
    <reaction evidence="1">
        <text>1D-myo-inositol 3-phosphate + UDP-N-acetyl-alpha-D-glucosamine = 1D-myo-inositol 2-acetamido-2-deoxy-alpha-D-glucopyranoside 3-phosphate + UDP + H(+)</text>
        <dbReference type="Rhea" id="RHEA:26188"/>
        <dbReference type="ChEBI" id="CHEBI:15378"/>
        <dbReference type="ChEBI" id="CHEBI:57705"/>
        <dbReference type="ChEBI" id="CHEBI:58223"/>
        <dbReference type="ChEBI" id="CHEBI:58401"/>
        <dbReference type="ChEBI" id="CHEBI:58892"/>
        <dbReference type="EC" id="2.4.1.250"/>
    </reaction>
</comment>
<comment type="subunit">
    <text evidence="1">Homodimer.</text>
</comment>
<comment type="similarity">
    <text evidence="1">Belongs to the glycosyltransferase group 1 family. MshA subfamily.</text>
</comment>
<sequence length="464" mass="49980">MEGAPRRPDRHARSEEERHVSQYASRLGRRSPAAPTRRRMLRKPRRVAMLSVHTSPLHQPGTGDAGGMNVYIVELAQRLAAINIEVEIFTRATTAALRPTVELSPGVLVRHVDAGPYEGLAKEDLPAQLCAFTHGVMQAWAGHRPGYYDLVHSHYWLSGHVGWLAAQRWGTPLVHAMHTMAKVKNAALAEGDTPEPAARVIGEMQIVAAADRLIANTSEEADELVRHYEAERGKVAVVHPGVNLDRFRPADGRAAARARLGLPQDALIPLFAGRIQPLKAPDVLLRAVAVLLDERPELRSNLVVPVVGGPSGSGLAKPEGLQKLAARLGIADVVRFRPPVGQEQLADWFRAASVLVMPSYNESFGLVAIEAQAAGTPVLAASVGGLPVAVADGRTGFLVQGHDPAAYARVLRDFADDPALSARMGRAAARHAECFGWDTAASATADVYTAAMQAHRRRVRSHHG</sequence>
<keyword id="KW-0328">Glycosyltransferase</keyword>
<keyword id="KW-0460">Magnesium</keyword>
<keyword id="KW-0479">Metal-binding</keyword>
<keyword id="KW-1185">Reference proteome</keyword>
<keyword id="KW-0808">Transferase</keyword>
<dbReference type="EC" id="2.4.1.250" evidence="1"/>
<dbReference type="EMBL" id="BA000030">
    <property type="protein sequence ID" value="BAC71718.1"/>
    <property type="molecule type" value="Genomic_DNA"/>
</dbReference>
<dbReference type="SMR" id="Q82G92"/>
<dbReference type="CAZy" id="GT4">
    <property type="family name" value="Glycosyltransferase Family 4"/>
</dbReference>
<dbReference type="KEGG" id="sma:SAVERM_4006"/>
<dbReference type="eggNOG" id="COG0438">
    <property type="taxonomic scope" value="Bacteria"/>
</dbReference>
<dbReference type="HOGENOM" id="CLU_009583_2_3_11"/>
<dbReference type="OrthoDB" id="9810929at2"/>
<dbReference type="Proteomes" id="UP000000428">
    <property type="component" value="Chromosome"/>
</dbReference>
<dbReference type="GO" id="GO:0008375">
    <property type="term" value="F:acetylglucosaminyltransferase activity"/>
    <property type="evidence" value="ECO:0007669"/>
    <property type="project" value="UniProtKB-UniRule"/>
</dbReference>
<dbReference type="GO" id="GO:0102710">
    <property type="term" value="F:D-inositol-3-phosphate glycosyltransferase activity"/>
    <property type="evidence" value="ECO:0007669"/>
    <property type="project" value="UniProtKB-EC"/>
</dbReference>
<dbReference type="GO" id="GO:0000287">
    <property type="term" value="F:magnesium ion binding"/>
    <property type="evidence" value="ECO:0007669"/>
    <property type="project" value="UniProtKB-UniRule"/>
</dbReference>
<dbReference type="GO" id="GO:0010125">
    <property type="term" value="P:mycothiol biosynthetic process"/>
    <property type="evidence" value="ECO:0007669"/>
    <property type="project" value="UniProtKB-UniRule"/>
</dbReference>
<dbReference type="CDD" id="cd03800">
    <property type="entry name" value="GT4_sucrose_synthase"/>
    <property type="match status" value="1"/>
</dbReference>
<dbReference type="Gene3D" id="3.40.50.2000">
    <property type="entry name" value="Glycogen Phosphorylase B"/>
    <property type="match status" value="2"/>
</dbReference>
<dbReference type="HAMAP" id="MF_01695">
    <property type="entry name" value="MshA"/>
    <property type="match status" value="1"/>
</dbReference>
<dbReference type="InterPro" id="IPR001296">
    <property type="entry name" value="Glyco_trans_1"/>
</dbReference>
<dbReference type="InterPro" id="IPR028098">
    <property type="entry name" value="Glyco_trans_4-like_N"/>
</dbReference>
<dbReference type="InterPro" id="IPR017814">
    <property type="entry name" value="Mycothiol_biosynthesis_MshA"/>
</dbReference>
<dbReference type="NCBIfam" id="TIGR03449">
    <property type="entry name" value="mycothiol_MshA"/>
    <property type="match status" value="1"/>
</dbReference>
<dbReference type="PANTHER" id="PTHR12526:SF510">
    <property type="entry name" value="D-INOSITOL 3-PHOSPHATE GLYCOSYLTRANSFERASE"/>
    <property type="match status" value="1"/>
</dbReference>
<dbReference type="PANTHER" id="PTHR12526">
    <property type="entry name" value="GLYCOSYLTRANSFERASE"/>
    <property type="match status" value="1"/>
</dbReference>
<dbReference type="Pfam" id="PF13579">
    <property type="entry name" value="Glyco_trans_4_4"/>
    <property type="match status" value="1"/>
</dbReference>
<dbReference type="Pfam" id="PF00534">
    <property type="entry name" value="Glycos_transf_1"/>
    <property type="match status" value="1"/>
</dbReference>
<dbReference type="SUPFAM" id="SSF53756">
    <property type="entry name" value="UDP-Glycosyltransferase/glycogen phosphorylase"/>
    <property type="match status" value="1"/>
</dbReference>
<reference key="1">
    <citation type="journal article" date="2001" name="Proc. Natl. Acad. Sci. U.S.A.">
        <title>Genome sequence of an industrial microorganism Streptomyces avermitilis: deducing the ability of producing secondary metabolites.</title>
        <authorList>
            <person name="Omura S."/>
            <person name="Ikeda H."/>
            <person name="Ishikawa J."/>
            <person name="Hanamoto A."/>
            <person name="Takahashi C."/>
            <person name="Shinose M."/>
            <person name="Takahashi Y."/>
            <person name="Horikawa H."/>
            <person name="Nakazawa H."/>
            <person name="Osonoe T."/>
            <person name="Kikuchi H."/>
            <person name="Shiba T."/>
            <person name="Sakaki Y."/>
            <person name="Hattori M."/>
        </authorList>
    </citation>
    <scope>NUCLEOTIDE SEQUENCE [LARGE SCALE GENOMIC DNA]</scope>
    <source>
        <strain>ATCC 31267 / DSM 46492 / JCM 5070 / NBRC 14893 / NCIMB 12804 / NRRL 8165 / MA-4680</strain>
    </source>
</reference>
<reference key="2">
    <citation type="journal article" date="2003" name="Nat. Biotechnol.">
        <title>Complete genome sequence and comparative analysis of the industrial microorganism Streptomyces avermitilis.</title>
        <authorList>
            <person name="Ikeda H."/>
            <person name="Ishikawa J."/>
            <person name="Hanamoto A."/>
            <person name="Shinose M."/>
            <person name="Kikuchi H."/>
            <person name="Shiba T."/>
            <person name="Sakaki Y."/>
            <person name="Hattori M."/>
            <person name="Omura S."/>
        </authorList>
    </citation>
    <scope>NUCLEOTIDE SEQUENCE [LARGE SCALE GENOMIC DNA]</scope>
    <source>
        <strain>ATCC 31267 / DSM 46492 / JCM 5070 / NBRC 14893 / NCIMB 12804 / NRRL 8165 / MA-4680</strain>
    </source>
</reference>
<accession>Q82G92</accession>
<organism>
    <name type="scientific">Streptomyces avermitilis (strain ATCC 31267 / DSM 46492 / JCM 5070 / NBRC 14893 / NCIMB 12804 / NRRL 8165 / MA-4680)</name>
    <dbReference type="NCBI Taxonomy" id="227882"/>
    <lineage>
        <taxon>Bacteria</taxon>
        <taxon>Bacillati</taxon>
        <taxon>Actinomycetota</taxon>
        <taxon>Actinomycetes</taxon>
        <taxon>Kitasatosporales</taxon>
        <taxon>Streptomycetaceae</taxon>
        <taxon>Streptomyces</taxon>
    </lineage>
</organism>
<protein>
    <recommendedName>
        <fullName>D-inositol 3-phosphate glycosyltransferase</fullName>
        <ecNumber evidence="1">2.4.1.250</ecNumber>
    </recommendedName>
    <alternativeName>
        <fullName evidence="1">N-acetylglucosamine-inositol-phosphate N-acetylglucosaminyltransferase</fullName>
        <shortName evidence="1">GlcNAc-Ins-P N-acetylglucosaminyltransferase</shortName>
    </alternativeName>
</protein>
<proteinExistence type="inferred from homology"/>